<reference key="1">
    <citation type="journal article" date="2004" name="Science">
        <title>The complete genome sequence of Propionibacterium acnes, a commensal of human skin.</title>
        <authorList>
            <person name="Brueggemann H."/>
            <person name="Henne A."/>
            <person name="Hoster F."/>
            <person name="Liesegang H."/>
            <person name="Wiezer A."/>
            <person name="Strittmatter A."/>
            <person name="Hujer S."/>
            <person name="Duerre P."/>
            <person name="Gottschalk G."/>
        </authorList>
    </citation>
    <scope>NUCLEOTIDE SEQUENCE [LARGE SCALE GENOMIC DNA]</scope>
    <source>
        <strain>DSM 16379 / KPA171202</strain>
    </source>
</reference>
<gene>
    <name evidence="1" type="primary">cysS</name>
    <name type="ordered locus">PPA0384</name>
</gene>
<keyword id="KW-0030">Aminoacyl-tRNA synthetase</keyword>
<keyword id="KW-0067">ATP-binding</keyword>
<keyword id="KW-0963">Cytoplasm</keyword>
<keyword id="KW-0436">Ligase</keyword>
<keyword id="KW-0479">Metal-binding</keyword>
<keyword id="KW-0547">Nucleotide-binding</keyword>
<keyword id="KW-0648">Protein biosynthesis</keyword>
<keyword id="KW-0862">Zinc</keyword>
<sequence>MVSDVSGYTGSLSHVTFKLYNTATHGIETFKPLREGQVSIYHCGMTVQSSPHLGHIRKEVVFDVLRRWLECSGYRVTVVANVTDIDDKILAKSAAAGTPWWAHAYHYENELHAAYKALGCRPPTYEPRATGHIPEMIELVKTLIEKGHAYPAPDGSGDVYFDVRSWPRYGELSGIRVDEMSPAEDSDPRGKRDPRDFALWKGHKEDEPETASWVSPWGRGRPGWHLECSAMSGKYLGEAFDIHGGGIDLRFPHHENELAQSAAAGRPFAHYWMHNAWVTMSGEKMSKSLGNTAQVSEVTKTYSPRAVRYFLLAPHYRSMIEFSPSDEGTMGSLDEATKAIERIDSFLDRASNLVGEQVTASHELSEAFVTAMDDDLGTPQAVAALFSQITEGNKSVSIGDAEATRHHLSQVKAMLAVFGLDPQAPEWADVAGSDDRLEPVVDGLVHAMLEQRAEARARKDWATADAIRDTLTNLGLTIEDTPAGAHWSLS</sequence>
<feature type="chain" id="PRO_0000159456" description="Cysteine--tRNA ligase">
    <location>
        <begin position="1"/>
        <end position="490"/>
    </location>
</feature>
<feature type="region of interest" description="Disordered" evidence="2">
    <location>
        <begin position="177"/>
        <end position="204"/>
    </location>
</feature>
<feature type="short sequence motif" description="'HIGH' region">
    <location>
        <begin position="45"/>
        <end position="55"/>
    </location>
</feature>
<feature type="short sequence motif" description="'KMSKS' region">
    <location>
        <begin position="284"/>
        <end position="288"/>
    </location>
</feature>
<feature type="compositionally biased region" description="Basic and acidic residues" evidence="2">
    <location>
        <begin position="186"/>
        <end position="204"/>
    </location>
</feature>
<feature type="binding site" evidence="1">
    <location>
        <position position="43"/>
    </location>
    <ligand>
        <name>Zn(2+)</name>
        <dbReference type="ChEBI" id="CHEBI:29105"/>
    </ligand>
</feature>
<feature type="binding site" evidence="1">
    <location>
        <position position="228"/>
    </location>
    <ligand>
        <name>Zn(2+)</name>
        <dbReference type="ChEBI" id="CHEBI:29105"/>
    </ligand>
</feature>
<feature type="binding site" evidence="1">
    <location>
        <position position="253"/>
    </location>
    <ligand>
        <name>Zn(2+)</name>
        <dbReference type="ChEBI" id="CHEBI:29105"/>
    </ligand>
</feature>
<feature type="binding site" evidence="1">
    <location>
        <position position="257"/>
    </location>
    <ligand>
        <name>Zn(2+)</name>
        <dbReference type="ChEBI" id="CHEBI:29105"/>
    </ligand>
</feature>
<feature type="binding site" evidence="1">
    <location>
        <position position="287"/>
    </location>
    <ligand>
        <name>ATP</name>
        <dbReference type="ChEBI" id="CHEBI:30616"/>
    </ligand>
</feature>
<protein>
    <recommendedName>
        <fullName evidence="1">Cysteine--tRNA ligase</fullName>
        <ecNumber evidence="1">6.1.1.16</ecNumber>
    </recommendedName>
    <alternativeName>
        <fullName evidence="1">Cysteinyl-tRNA synthetase</fullName>
        <shortName evidence="1">CysRS</shortName>
    </alternativeName>
</protein>
<dbReference type="EC" id="6.1.1.16" evidence="1"/>
<dbReference type="EMBL" id="AE017283">
    <property type="protein sequence ID" value="AAT82136.1"/>
    <property type="molecule type" value="Genomic_DNA"/>
</dbReference>
<dbReference type="SMR" id="Q6AAT0"/>
<dbReference type="EnsemblBacteria" id="AAT82136">
    <property type="protein sequence ID" value="AAT82136"/>
    <property type="gene ID" value="PPA0384"/>
</dbReference>
<dbReference type="KEGG" id="pac:PPA0384"/>
<dbReference type="eggNOG" id="COG0215">
    <property type="taxonomic scope" value="Bacteria"/>
</dbReference>
<dbReference type="HOGENOM" id="CLU_013528_0_1_11"/>
<dbReference type="Proteomes" id="UP000000603">
    <property type="component" value="Chromosome"/>
</dbReference>
<dbReference type="GO" id="GO:0005829">
    <property type="term" value="C:cytosol"/>
    <property type="evidence" value="ECO:0007669"/>
    <property type="project" value="TreeGrafter"/>
</dbReference>
<dbReference type="GO" id="GO:0005524">
    <property type="term" value="F:ATP binding"/>
    <property type="evidence" value="ECO:0007669"/>
    <property type="project" value="UniProtKB-UniRule"/>
</dbReference>
<dbReference type="GO" id="GO:0004817">
    <property type="term" value="F:cysteine-tRNA ligase activity"/>
    <property type="evidence" value="ECO:0007669"/>
    <property type="project" value="UniProtKB-UniRule"/>
</dbReference>
<dbReference type="GO" id="GO:0008270">
    <property type="term" value="F:zinc ion binding"/>
    <property type="evidence" value="ECO:0007669"/>
    <property type="project" value="UniProtKB-UniRule"/>
</dbReference>
<dbReference type="GO" id="GO:0006423">
    <property type="term" value="P:cysteinyl-tRNA aminoacylation"/>
    <property type="evidence" value="ECO:0007669"/>
    <property type="project" value="UniProtKB-UniRule"/>
</dbReference>
<dbReference type="CDD" id="cd00672">
    <property type="entry name" value="CysRS_core"/>
    <property type="match status" value="1"/>
</dbReference>
<dbReference type="FunFam" id="3.40.50.620:FF:000068">
    <property type="entry name" value="Cysteine--tRNA ligase"/>
    <property type="match status" value="1"/>
</dbReference>
<dbReference type="Gene3D" id="1.20.120.1910">
    <property type="entry name" value="Cysteine-tRNA ligase, C-terminal anti-codon recognition domain"/>
    <property type="match status" value="1"/>
</dbReference>
<dbReference type="Gene3D" id="3.40.50.620">
    <property type="entry name" value="HUPs"/>
    <property type="match status" value="1"/>
</dbReference>
<dbReference type="HAMAP" id="MF_00041">
    <property type="entry name" value="Cys_tRNA_synth"/>
    <property type="match status" value="1"/>
</dbReference>
<dbReference type="InterPro" id="IPR015803">
    <property type="entry name" value="Cys-tRNA-ligase"/>
</dbReference>
<dbReference type="InterPro" id="IPR015273">
    <property type="entry name" value="Cys-tRNA-synt_Ia_DALR"/>
</dbReference>
<dbReference type="InterPro" id="IPR024909">
    <property type="entry name" value="Cys-tRNA/MSH_ligase"/>
</dbReference>
<dbReference type="InterPro" id="IPR056411">
    <property type="entry name" value="CysS_C"/>
</dbReference>
<dbReference type="InterPro" id="IPR014729">
    <property type="entry name" value="Rossmann-like_a/b/a_fold"/>
</dbReference>
<dbReference type="InterPro" id="IPR032678">
    <property type="entry name" value="tRNA-synt_1_cat_dom"/>
</dbReference>
<dbReference type="InterPro" id="IPR009080">
    <property type="entry name" value="tRNAsynth_Ia_anticodon-bd"/>
</dbReference>
<dbReference type="NCBIfam" id="TIGR00435">
    <property type="entry name" value="cysS"/>
    <property type="match status" value="1"/>
</dbReference>
<dbReference type="PANTHER" id="PTHR10890:SF30">
    <property type="entry name" value="CYSTEINE--TRNA LIGASE"/>
    <property type="match status" value="1"/>
</dbReference>
<dbReference type="PANTHER" id="PTHR10890">
    <property type="entry name" value="CYSTEINYL-TRNA SYNTHETASE"/>
    <property type="match status" value="1"/>
</dbReference>
<dbReference type="Pfam" id="PF23493">
    <property type="entry name" value="CysS_C"/>
    <property type="match status" value="1"/>
</dbReference>
<dbReference type="Pfam" id="PF09190">
    <property type="entry name" value="DALR_2"/>
    <property type="match status" value="1"/>
</dbReference>
<dbReference type="Pfam" id="PF01406">
    <property type="entry name" value="tRNA-synt_1e"/>
    <property type="match status" value="1"/>
</dbReference>
<dbReference type="PRINTS" id="PR00983">
    <property type="entry name" value="TRNASYNTHCYS"/>
</dbReference>
<dbReference type="SMART" id="SM00840">
    <property type="entry name" value="DALR_2"/>
    <property type="match status" value="1"/>
</dbReference>
<dbReference type="SUPFAM" id="SSF47323">
    <property type="entry name" value="Anticodon-binding domain of a subclass of class I aminoacyl-tRNA synthetases"/>
    <property type="match status" value="1"/>
</dbReference>
<dbReference type="SUPFAM" id="SSF52374">
    <property type="entry name" value="Nucleotidylyl transferase"/>
    <property type="match status" value="1"/>
</dbReference>
<organism>
    <name type="scientific">Cutibacterium acnes (strain DSM 16379 / KPA171202)</name>
    <name type="common">Propionibacterium acnes</name>
    <dbReference type="NCBI Taxonomy" id="267747"/>
    <lineage>
        <taxon>Bacteria</taxon>
        <taxon>Bacillati</taxon>
        <taxon>Actinomycetota</taxon>
        <taxon>Actinomycetes</taxon>
        <taxon>Propionibacteriales</taxon>
        <taxon>Propionibacteriaceae</taxon>
        <taxon>Cutibacterium</taxon>
    </lineage>
</organism>
<proteinExistence type="inferred from homology"/>
<name>SYC_CUTAK</name>
<accession>Q6AAT0</accession>
<comment type="catalytic activity">
    <reaction evidence="1">
        <text>tRNA(Cys) + L-cysteine + ATP = L-cysteinyl-tRNA(Cys) + AMP + diphosphate</text>
        <dbReference type="Rhea" id="RHEA:17773"/>
        <dbReference type="Rhea" id="RHEA-COMP:9661"/>
        <dbReference type="Rhea" id="RHEA-COMP:9679"/>
        <dbReference type="ChEBI" id="CHEBI:30616"/>
        <dbReference type="ChEBI" id="CHEBI:33019"/>
        <dbReference type="ChEBI" id="CHEBI:35235"/>
        <dbReference type="ChEBI" id="CHEBI:78442"/>
        <dbReference type="ChEBI" id="CHEBI:78517"/>
        <dbReference type="ChEBI" id="CHEBI:456215"/>
        <dbReference type="EC" id="6.1.1.16"/>
    </reaction>
</comment>
<comment type="cofactor">
    <cofactor evidence="1">
        <name>Zn(2+)</name>
        <dbReference type="ChEBI" id="CHEBI:29105"/>
    </cofactor>
    <text evidence="1">Binds 1 zinc ion per subunit.</text>
</comment>
<comment type="subunit">
    <text evidence="1">Monomer.</text>
</comment>
<comment type="subcellular location">
    <subcellularLocation>
        <location evidence="1">Cytoplasm</location>
    </subcellularLocation>
</comment>
<comment type="similarity">
    <text evidence="1">Belongs to the class-I aminoacyl-tRNA synthetase family.</text>
</comment>
<evidence type="ECO:0000255" key="1">
    <source>
        <dbReference type="HAMAP-Rule" id="MF_00041"/>
    </source>
</evidence>
<evidence type="ECO:0000256" key="2">
    <source>
        <dbReference type="SAM" id="MobiDB-lite"/>
    </source>
</evidence>